<reference key="1">
    <citation type="submission" date="2006-12" db="EMBL/GenBank/DDBJ databases">
        <authorList>
            <person name="Fouts D.E."/>
            <person name="Nelson K.E."/>
            <person name="Sebastian Y."/>
        </authorList>
    </citation>
    <scope>NUCLEOTIDE SEQUENCE [LARGE SCALE GENOMIC DNA]</scope>
    <source>
        <strain>81-176</strain>
    </source>
</reference>
<evidence type="ECO:0000255" key="1">
    <source>
        <dbReference type="HAMAP-Rule" id="MF_00176"/>
    </source>
</evidence>
<dbReference type="EC" id="6.1.1.11" evidence="1"/>
<dbReference type="EMBL" id="CP000538">
    <property type="protein sequence ID" value="EAQ73047.1"/>
    <property type="molecule type" value="Genomic_DNA"/>
</dbReference>
<dbReference type="RefSeq" id="WP_009882121.1">
    <property type="nucleotide sequence ID" value="NC_008787.1"/>
</dbReference>
<dbReference type="SMR" id="A1VYA9"/>
<dbReference type="KEGG" id="cjj:CJJ81176_0412"/>
<dbReference type="eggNOG" id="COG0172">
    <property type="taxonomic scope" value="Bacteria"/>
</dbReference>
<dbReference type="HOGENOM" id="CLU_023797_1_1_7"/>
<dbReference type="UniPathway" id="UPA00906">
    <property type="reaction ID" value="UER00895"/>
</dbReference>
<dbReference type="Proteomes" id="UP000000646">
    <property type="component" value="Chromosome"/>
</dbReference>
<dbReference type="GO" id="GO:0005737">
    <property type="term" value="C:cytoplasm"/>
    <property type="evidence" value="ECO:0007669"/>
    <property type="project" value="UniProtKB-SubCell"/>
</dbReference>
<dbReference type="GO" id="GO:0005524">
    <property type="term" value="F:ATP binding"/>
    <property type="evidence" value="ECO:0007669"/>
    <property type="project" value="UniProtKB-UniRule"/>
</dbReference>
<dbReference type="GO" id="GO:0004828">
    <property type="term" value="F:serine-tRNA ligase activity"/>
    <property type="evidence" value="ECO:0007669"/>
    <property type="project" value="UniProtKB-UniRule"/>
</dbReference>
<dbReference type="GO" id="GO:0016260">
    <property type="term" value="P:selenocysteine biosynthetic process"/>
    <property type="evidence" value="ECO:0007669"/>
    <property type="project" value="UniProtKB-UniRule"/>
</dbReference>
<dbReference type="GO" id="GO:0006434">
    <property type="term" value="P:seryl-tRNA aminoacylation"/>
    <property type="evidence" value="ECO:0007669"/>
    <property type="project" value="UniProtKB-UniRule"/>
</dbReference>
<dbReference type="CDD" id="cd00770">
    <property type="entry name" value="SerRS_core"/>
    <property type="match status" value="1"/>
</dbReference>
<dbReference type="Gene3D" id="3.30.930.10">
    <property type="entry name" value="Bira Bifunctional Protein, Domain 2"/>
    <property type="match status" value="1"/>
</dbReference>
<dbReference type="Gene3D" id="1.10.287.40">
    <property type="entry name" value="Serine-tRNA synthetase, tRNA binding domain"/>
    <property type="match status" value="1"/>
</dbReference>
<dbReference type="HAMAP" id="MF_00176">
    <property type="entry name" value="Ser_tRNA_synth_type1"/>
    <property type="match status" value="1"/>
</dbReference>
<dbReference type="InterPro" id="IPR002314">
    <property type="entry name" value="aa-tRNA-synt_IIb"/>
</dbReference>
<dbReference type="InterPro" id="IPR006195">
    <property type="entry name" value="aa-tRNA-synth_II"/>
</dbReference>
<dbReference type="InterPro" id="IPR045864">
    <property type="entry name" value="aa-tRNA-synth_II/BPL/LPL"/>
</dbReference>
<dbReference type="InterPro" id="IPR002317">
    <property type="entry name" value="Ser-tRNA-ligase_type_1"/>
</dbReference>
<dbReference type="InterPro" id="IPR015866">
    <property type="entry name" value="Ser-tRNA-synth_1_N"/>
</dbReference>
<dbReference type="InterPro" id="IPR042103">
    <property type="entry name" value="SerRS_1_N_sf"/>
</dbReference>
<dbReference type="InterPro" id="IPR033729">
    <property type="entry name" value="SerRS_core"/>
</dbReference>
<dbReference type="InterPro" id="IPR010978">
    <property type="entry name" value="tRNA-bd_arm"/>
</dbReference>
<dbReference type="NCBIfam" id="TIGR00414">
    <property type="entry name" value="serS"/>
    <property type="match status" value="1"/>
</dbReference>
<dbReference type="PANTHER" id="PTHR43697:SF1">
    <property type="entry name" value="SERINE--TRNA LIGASE"/>
    <property type="match status" value="1"/>
</dbReference>
<dbReference type="PANTHER" id="PTHR43697">
    <property type="entry name" value="SERYL-TRNA SYNTHETASE"/>
    <property type="match status" value="1"/>
</dbReference>
<dbReference type="Pfam" id="PF02403">
    <property type="entry name" value="Seryl_tRNA_N"/>
    <property type="match status" value="1"/>
</dbReference>
<dbReference type="Pfam" id="PF00587">
    <property type="entry name" value="tRNA-synt_2b"/>
    <property type="match status" value="1"/>
</dbReference>
<dbReference type="PIRSF" id="PIRSF001529">
    <property type="entry name" value="Ser-tRNA-synth_IIa"/>
    <property type="match status" value="1"/>
</dbReference>
<dbReference type="PRINTS" id="PR00981">
    <property type="entry name" value="TRNASYNTHSER"/>
</dbReference>
<dbReference type="SUPFAM" id="SSF55681">
    <property type="entry name" value="Class II aaRS and biotin synthetases"/>
    <property type="match status" value="1"/>
</dbReference>
<dbReference type="SUPFAM" id="SSF46589">
    <property type="entry name" value="tRNA-binding arm"/>
    <property type="match status" value="1"/>
</dbReference>
<dbReference type="PROSITE" id="PS50862">
    <property type="entry name" value="AA_TRNA_LIGASE_II"/>
    <property type="match status" value="1"/>
</dbReference>
<name>SYS_CAMJJ</name>
<keyword id="KW-0030">Aminoacyl-tRNA synthetase</keyword>
<keyword id="KW-0067">ATP-binding</keyword>
<keyword id="KW-0963">Cytoplasm</keyword>
<keyword id="KW-0436">Ligase</keyword>
<keyword id="KW-0547">Nucleotide-binding</keyword>
<keyword id="KW-0648">Protein biosynthesis</keyword>
<gene>
    <name evidence="1" type="primary">serS</name>
    <name type="ordered locus">CJJ81176_0412</name>
</gene>
<organism>
    <name type="scientific">Campylobacter jejuni subsp. jejuni serotype O:23/36 (strain 81-176)</name>
    <dbReference type="NCBI Taxonomy" id="354242"/>
    <lineage>
        <taxon>Bacteria</taxon>
        <taxon>Pseudomonadati</taxon>
        <taxon>Campylobacterota</taxon>
        <taxon>Epsilonproteobacteria</taxon>
        <taxon>Campylobacterales</taxon>
        <taxon>Campylobacteraceae</taxon>
        <taxon>Campylobacter</taxon>
    </lineage>
</organism>
<comment type="function">
    <text evidence="1">Catalyzes the attachment of serine to tRNA(Ser). Is also able to aminoacylate tRNA(Sec) with serine, to form the misacylated tRNA L-seryl-tRNA(Sec), which will be further converted into selenocysteinyl-tRNA(Sec).</text>
</comment>
<comment type="catalytic activity">
    <reaction evidence="1">
        <text>tRNA(Ser) + L-serine + ATP = L-seryl-tRNA(Ser) + AMP + diphosphate + H(+)</text>
        <dbReference type="Rhea" id="RHEA:12292"/>
        <dbReference type="Rhea" id="RHEA-COMP:9669"/>
        <dbReference type="Rhea" id="RHEA-COMP:9703"/>
        <dbReference type="ChEBI" id="CHEBI:15378"/>
        <dbReference type="ChEBI" id="CHEBI:30616"/>
        <dbReference type="ChEBI" id="CHEBI:33019"/>
        <dbReference type="ChEBI" id="CHEBI:33384"/>
        <dbReference type="ChEBI" id="CHEBI:78442"/>
        <dbReference type="ChEBI" id="CHEBI:78533"/>
        <dbReference type="ChEBI" id="CHEBI:456215"/>
        <dbReference type="EC" id="6.1.1.11"/>
    </reaction>
</comment>
<comment type="catalytic activity">
    <reaction evidence="1">
        <text>tRNA(Sec) + L-serine + ATP = L-seryl-tRNA(Sec) + AMP + diphosphate + H(+)</text>
        <dbReference type="Rhea" id="RHEA:42580"/>
        <dbReference type="Rhea" id="RHEA-COMP:9742"/>
        <dbReference type="Rhea" id="RHEA-COMP:10128"/>
        <dbReference type="ChEBI" id="CHEBI:15378"/>
        <dbReference type="ChEBI" id="CHEBI:30616"/>
        <dbReference type="ChEBI" id="CHEBI:33019"/>
        <dbReference type="ChEBI" id="CHEBI:33384"/>
        <dbReference type="ChEBI" id="CHEBI:78442"/>
        <dbReference type="ChEBI" id="CHEBI:78533"/>
        <dbReference type="ChEBI" id="CHEBI:456215"/>
        <dbReference type="EC" id="6.1.1.11"/>
    </reaction>
</comment>
<comment type="pathway">
    <text evidence="1">Aminoacyl-tRNA biosynthesis; selenocysteinyl-tRNA(Sec) biosynthesis; L-seryl-tRNA(Sec) from L-serine and tRNA(Sec): step 1/1.</text>
</comment>
<comment type="subunit">
    <text evidence="1">Homodimer. The tRNA molecule binds across the dimer.</text>
</comment>
<comment type="subcellular location">
    <subcellularLocation>
        <location evidence="1">Cytoplasm</location>
    </subcellularLocation>
</comment>
<comment type="domain">
    <text evidence="1">Consists of two distinct domains, a catalytic core and a N-terminal extension that is involved in tRNA binding.</text>
</comment>
<comment type="similarity">
    <text evidence="1">Belongs to the class-II aminoacyl-tRNA synthetase family. Type-1 seryl-tRNA synthetase subfamily.</text>
</comment>
<sequence>MLDLKNLQNNFDEVAKKLKNKKVDENILKKLAELFASLKKEKTALEEFQAFQNKFSKELATAEDKESLKAKLSENKSKINEQSAKVNALENELEEIAHAIPNIPDECVPVGEDEDENVELKKVLNPSSFDFTPKEHFELGESLNWLDFVRGVKISQSRFCVLKNEGALLSRALVNYMIDFNRSRGFEFVNVPFLVNGATMFGTGQLPKFKEDMYKVDDEDLYLISTSEIPVTNLYSGEILASETLPIKMTCYSACFRKEAGSAGRDTRGIIRQHQFEKVELVSITKPEQSDSVFNEMLECASDLLSSLGLAHRHLMLCTGDLGFSAAKTVDLEVWLPGQNKYREISSVSNCRDFQARRAKIRYKNEQGKNELVHTLNGSSLAVGRTLVAIMENYQDKEGKIHIPDVLKKYF</sequence>
<proteinExistence type="inferred from homology"/>
<feature type="chain" id="PRO_1000019645" description="Serine--tRNA ligase">
    <location>
        <begin position="1"/>
        <end position="411"/>
    </location>
</feature>
<feature type="binding site" evidence="1">
    <location>
        <begin position="226"/>
        <end position="228"/>
    </location>
    <ligand>
        <name>L-serine</name>
        <dbReference type="ChEBI" id="CHEBI:33384"/>
    </ligand>
</feature>
<feature type="binding site" evidence="1">
    <location>
        <begin position="257"/>
        <end position="259"/>
    </location>
    <ligand>
        <name>ATP</name>
        <dbReference type="ChEBI" id="CHEBI:30616"/>
    </ligand>
</feature>
<feature type="binding site" evidence="1">
    <location>
        <position position="280"/>
    </location>
    <ligand>
        <name>L-serine</name>
        <dbReference type="ChEBI" id="CHEBI:33384"/>
    </ligand>
</feature>
<feature type="binding site" evidence="1">
    <location>
        <begin position="344"/>
        <end position="347"/>
    </location>
    <ligand>
        <name>ATP</name>
        <dbReference type="ChEBI" id="CHEBI:30616"/>
    </ligand>
</feature>
<feature type="binding site" evidence="1">
    <location>
        <position position="379"/>
    </location>
    <ligand>
        <name>L-serine</name>
        <dbReference type="ChEBI" id="CHEBI:33384"/>
    </ligand>
</feature>
<accession>A1VYA9</accession>
<protein>
    <recommendedName>
        <fullName evidence="1">Serine--tRNA ligase</fullName>
        <ecNumber evidence="1">6.1.1.11</ecNumber>
    </recommendedName>
    <alternativeName>
        <fullName evidence="1">Seryl-tRNA synthetase</fullName>
        <shortName evidence="1">SerRS</shortName>
    </alternativeName>
    <alternativeName>
        <fullName evidence="1">Seryl-tRNA(Ser/Sec) synthetase</fullName>
    </alternativeName>
</protein>